<sequence>SIQHVYGAQHPPFDPLLHGTLLKSTAKMPTTPVKAKRVSTFQEFESNTSDAWDAGEDDDELLAMAAESLNSEVVMETANRVLRNHSQRQGRPTLQEGPGLQQKPRPEAEPPSPPSGDLRLVKSVSESHTSCPAESASDAAPLQRSQSLPHAAAVTLGGTSDPGTLSSSALSEREASRLDKFEQLLAGPNTDLEELRKLSWSGIPKPVRPMTWKLLSGYLPANVDRRPATLQRKQKEYFAFIEHYYDSRNDEVHQDTYRQIHIDIPRMSPEALILQPKVTEIFERILFIWAIRHPASGYVQGINDLVTPFFVVFICEYIEAEEVDTVDVSGVPAEVLRNIEADTYWCMSKLLDGIQDNYTFAQPGIQMKVKMLEELVSRIDEQVHRHLDQHEVRYLQFAFRWMNNLLMREVPLRCTIRLWDTYQSEPEGFSHFHLYVCAAFLVRWRKEILEEKDFQELLLFLQNLPTAHWDDEDISLLLAEAYRLKFAFADAPNHYKK</sequence>
<keyword id="KW-0343">GTPase activation</keyword>
<keyword id="KW-0597">Phosphoprotein</keyword>
<keyword id="KW-1185">Reference proteome</keyword>
<comment type="function">
    <text evidence="1">May act as a GTPase-activating protein for Rab family protein(s).</text>
</comment>
<comment type="subunit">
    <text evidence="3">Homodimer. Interacts with ACBD3 and ARFGEF1. Interacts with YWHAB, YWHAE, YWHAG, YWHAH, YWHAQ and YWHAZ.</text>
</comment>
<comment type="sequence caution" evidence="6">
    <conflict type="erroneous initiation">
        <sequence resource="EMBL-CDS" id="BAB46876"/>
    </conflict>
</comment>
<accession>Q95KI1</accession>
<reference key="1">
    <citation type="submission" date="2001-04" db="EMBL/GenBank/DDBJ databases">
        <title>Isolation of full-length cDNA clones from macaque brain cDNA libraries.</title>
        <authorList>
            <person name="Osada N."/>
            <person name="Hida M."/>
            <person name="Kusuda J."/>
            <person name="Tanuma R."/>
            <person name="Iseki K."/>
            <person name="Hirai M."/>
            <person name="Terao K."/>
            <person name="Suzuki Y."/>
            <person name="Sugano S."/>
            <person name="Hashimoto K."/>
        </authorList>
    </citation>
    <scope>NUCLEOTIDE SEQUENCE [LARGE SCALE MRNA]</scope>
    <source>
        <tissue>Temporal cortex</tissue>
    </source>
</reference>
<gene>
    <name type="primary">TBC1D22A</name>
    <name type="ORF">QtrA-11492</name>
</gene>
<organism>
    <name type="scientific">Macaca fascicularis</name>
    <name type="common">Crab-eating macaque</name>
    <name type="synonym">Cynomolgus monkey</name>
    <dbReference type="NCBI Taxonomy" id="9541"/>
    <lineage>
        <taxon>Eukaryota</taxon>
        <taxon>Metazoa</taxon>
        <taxon>Chordata</taxon>
        <taxon>Craniata</taxon>
        <taxon>Vertebrata</taxon>
        <taxon>Euteleostomi</taxon>
        <taxon>Mammalia</taxon>
        <taxon>Eutheria</taxon>
        <taxon>Euarchontoglires</taxon>
        <taxon>Primates</taxon>
        <taxon>Haplorrhini</taxon>
        <taxon>Catarrhini</taxon>
        <taxon>Cercopithecidae</taxon>
        <taxon>Cercopithecinae</taxon>
        <taxon>Macaca</taxon>
    </lineage>
</organism>
<feature type="chain" id="PRO_0000208052" description="TBC1 domain family member 22A">
    <location>
        <begin position="1" status="less than"/>
        <end position="497"/>
    </location>
</feature>
<feature type="domain" description="Rab-GAP TBC" evidence="4">
    <location>
        <begin position="202"/>
        <end position="426"/>
    </location>
</feature>
<feature type="region of interest" description="Disordered" evidence="5">
    <location>
        <begin position="83"/>
        <end position="147"/>
    </location>
</feature>
<feature type="modified residue" description="Phosphoserine" evidence="3">
    <location>
        <position position="112"/>
    </location>
</feature>
<feature type="modified residue" description="Phosphoserine" evidence="2">
    <location>
        <position position="125"/>
    </location>
</feature>
<feature type="modified residue" description="Phosphoserine" evidence="2">
    <location>
        <position position="147"/>
    </location>
</feature>
<feature type="non-terminal residue">
    <location>
        <position position="1"/>
    </location>
</feature>
<protein>
    <recommendedName>
        <fullName>TBC1 domain family member 22A</fullName>
    </recommendedName>
</protein>
<proteinExistence type="evidence at transcript level"/>
<evidence type="ECO:0000250" key="1"/>
<evidence type="ECO:0000250" key="2">
    <source>
        <dbReference type="UniProtKB" id="Q8R5A6"/>
    </source>
</evidence>
<evidence type="ECO:0000250" key="3">
    <source>
        <dbReference type="UniProtKB" id="Q8WUA7"/>
    </source>
</evidence>
<evidence type="ECO:0000255" key="4">
    <source>
        <dbReference type="PROSITE-ProRule" id="PRU00163"/>
    </source>
</evidence>
<evidence type="ECO:0000256" key="5">
    <source>
        <dbReference type="SAM" id="MobiDB-lite"/>
    </source>
</evidence>
<evidence type="ECO:0000305" key="6"/>
<name>TB22A_MACFA</name>
<dbReference type="EMBL" id="AB060857">
    <property type="protein sequence ID" value="BAB46876.1"/>
    <property type="status" value="ALT_INIT"/>
    <property type="molecule type" value="mRNA"/>
</dbReference>
<dbReference type="SMR" id="Q95KI1"/>
<dbReference type="STRING" id="9541.ENSMFAP00000041186"/>
<dbReference type="eggNOG" id="KOG1092">
    <property type="taxonomic scope" value="Eukaryota"/>
</dbReference>
<dbReference type="Proteomes" id="UP000233100">
    <property type="component" value="Unplaced"/>
</dbReference>
<dbReference type="GO" id="GO:0071889">
    <property type="term" value="F:14-3-3 protein binding"/>
    <property type="evidence" value="ECO:0000250"/>
    <property type="project" value="UniProtKB"/>
</dbReference>
<dbReference type="GO" id="GO:0005096">
    <property type="term" value="F:GTPase activator activity"/>
    <property type="evidence" value="ECO:0007669"/>
    <property type="project" value="UniProtKB-KW"/>
</dbReference>
<dbReference type="GO" id="GO:0042803">
    <property type="term" value="F:protein homodimerization activity"/>
    <property type="evidence" value="ECO:0000250"/>
    <property type="project" value="UniProtKB"/>
</dbReference>
<dbReference type="FunFam" id="1.10.10.750:FF:000009">
    <property type="entry name" value="TBC1 domain family member 22A"/>
    <property type="match status" value="1"/>
</dbReference>
<dbReference type="FunFam" id="1.10.472.80:FF:000001">
    <property type="entry name" value="TBC1 domain family member 22B"/>
    <property type="match status" value="1"/>
</dbReference>
<dbReference type="FunFam" id="1.10.8.270:FF:000004">
    <property type="entry name" value="TBC1 domain family, member 22B"/>
    <property type="match status" value="1"/>
</dbReference>
<dbReference type="Gene3D" id="1.10.8.270">
    <property type="entry name" value="putative rabgap domain of human tbc1 domain family member 14 like domains"/>
    <property type="match status" value="1"/>
</dbReference>
<dbReference type="Gene3D" id="1.10.10.750">
    <property type="entry name" value="Ypt/Rab-GAP domain of gyp1p, domain 1"/>
    <property type="match status" value="1"/>
</dbReference>
<dbReference type="Gene3D" id="1.10.472.80">
    <property type="entry name" value="Ypt/Rab-GAP domain of gyp1p, domain 3"/>
    <property type="match status" value="1"/>
</dbReference>
<dbReference type="InterPro" id="IPR000195">
    <property type="entry name" value="Rab-GAP-TBC_dom"/>
</dbReference>
<dbReference type="InterPro" id="IPR035969">
    <property type="entry name" value="Rab-GAP_TBC_sf"/>
</dbReference>
<dbReference type="PANTHER" id="PTHR22957:SF255">
    <property type="entry name" value="TBC1 DOMAIN FAMILY MEMBER 22A"/>
    <property type="match status" value="1"/>
</dbReference>
<dbReference type="PANTHER" id="PTHR22957">
    <property type="entry name" value="TBC1 DOMAIN FAMILY MEMBER GTPASE-ACTIVATING PROTEIN"/>
    <property type="match status" value="1"/>
</dbReference>
<dbReference type="Pfam" id="PF00566">
    <property type="entry name" value="RabGAP-TBC"/>
    <property type="match status" value="1"/>
</dbReference>
<dbReference type="SMART" id="SM00164">
    <property type="entry name" value="TBC"/>
    <property type="match status" value="1"/>
</dbReference>
<dbReference type="SUPFAM" id="SSF47923">
    <property type="entry name" value="Ypt/Rab-GAP domain of gyp1p"/>
    <property type="match status" value="2"/>
</dbReference>
<dbReference type="PROSITE" id="PS50086">
    <property type="entry name" value="TBC_RABGAP"/>
    <property type="match status" value="1"/>
</dbReference>